<organism>
    <name type="scientific">Mus musculus</name>
    <name type="common">Mouse</name>
    <dbReference type="NCBI Taxonomy" id="10090"/>
    <lineage>
        <taxon>Eukaryota</taxon>
        <taxon>Metazoa</taxon>
        <taxon>Chordata</taxon>
        <taxon>Craniata</taxon>
        <taxon>Vertebrata</taxon>
        <taxon>Euteleostomi</taxon>
        <taxon>Mammalia</taxon>
        <taxon>Eutheria</taxon>
        <taxon>Euarchontoglires</taxon>
        <taxon>Glires</taxon>
        <taxon>Rodentia</taxon>
        <taxon>Myomorpha</taxon>
        <taxon>Muroidea</taxon>
        <taxon>Muridae</taxon>
        <taxon>Murinae</taxon>
        <taxon>Mus</taxon>
        <taxon>Mus</taxon>
    </lineage>
</organism>
<dbReference type="EMBL" id="M34398">
    <property type="protein sequence ID" value="AAA39444.1"/>
    <property type="molecule type" value="mRNA"/>
</dbReference>
<dbReference type="EMBL" id="U09189">
    <property type="protein sequence ID" value="AAA82152.1"/>
    <property type="molecule type" value="Genomic_DNA"/>
</dbReference>
<dbReference type="EMBL" id="BC026781">
    <property type="status" value="NOT_ANNOTATED_CDS"/>
    <property type="molecule type" value="mRNA"/>
</dbReference>
<dbReference type="EMBL" id="BC058223">
    <property type="protein sequence ID" value="AAH58223.1"/>
    <property type="molecule type" value="mRNA"/>
</dbReference>
<dbReference type="CCDS" id="CCDS17546.1"/>
<dbReference type="PIR" id="A35628">
    <property type="entry name" value="A35628"/>
</dbReference>
<dbReference type="RefSeq" id="NP_032534.2">
    <property type="nucleotide sequence ID" value="NM_008508.3"/>
</dbReference>
<dbReference type="FunCoup" id="P18165">
    <property type="interactions" value="15"/>
</dbReference>
<dbReference type="STRING" id="10090.ENSMUSP00000052128"/>
<dbReference type="iPTMnet" id="P18165"/>
<dbReference type="PhosphoSitePlus" id="P18165"/>
<dbReference type="PaxDb" id="10090-ENSMUSP00000052128"/>
<dbReference type="ProteomicsDB" id="286229"/>
<dbReference type="Ensembl" id="ENSMUST00000058150.8">
    <property type="protein sequence ID" value="ENSMUSP00000052128.7"/>
    <property type="gene ID" value="ENSMUSG00000043165.8"/>
</dbReference>
<dbReference type="GeneID" id="16939"/>
<dbReference type="KEGG" id="mmu:16939"/>
<dbReference type="UCSC" id="uc008qdk.1">
    <property type="organism name" value="mouse"/>
</dbReference>
<dbReference type="AGR" id="MGI:96816"/>
<dbReference type="CTD" id="4014"/>
<dbReference type="MGI" id="MGI:96816">
    <property type="gene designation" value="Loricrin"/>
</dbReference>
<dbReference type="VEuPathDB" id="HostDB:ENSMUSG00000043165"/>
<dbReference type="eggNOG" id="ENOG502RU07">
    <property type="taxonomic scope" value="Eukaryota"/>
</dbReference>
<dbReference type="GeneTree" id="ENSGT00950000183801"/>
<dbReference type="HOGENOM" id="CLU_609128_0_0_1"/>
<dbReference type="InParanoid" id="P18165"/>
<dbReference type="OMA" id="PMGGRFR"/>
<dbReference type="BioGRID-ORCS" id="16939">
    <property type="hits" value="3 hits in 76 CRISPR screens"/>
</dbReference>
<dbReference type="PRO" id="PR:P18165"/>
<dbReference type="Proteomes" id="UP000000589">
    <property type="component" value="Chromosome 3"/>
</dbReference>
<dbReference type="RNAct" id="P18165">
    <property type="molecule type" value="protein"/>
</dbReference>
<dbReference type="Bgee" id="ENSMUSG00000043165">
    <property type="expression patterns" value="Expressed in skin of external ear and 183 other cell types or tissues"/>
</dbReference>
<dbReference type="GO" id="GO:0001533">
    <property type="term" value="C:cornified envelope"/>
    <property type="evidence" value="ECO:0000314"/>
    <property type="project" value="MGI"/>
</dbReference>
<dbReference type="GO" id="GO:0005737">
    <property type="term" value="C:cytoplasm"/>
    <property type="evidence" value="ECO:0000266"/>
    <property type="project" value="MGI"/>
</dbReference>
<dbReference type="GO" id="GO:0009898">
    <property type="term" value="C:cytoplasmic side of plasma membrane"/>
    <property type="evidence" value="ECO:0000314"/>
    <property type="project" value="MGI"/>
</dbReference>
<dbReference type="GO" id="GO:0005200">
    <property type="term" value="F:structural constituent of cytoskeleton"/>
    <property type="evidence" value="ECO:0000314"/>
    <property type="project" value="MGI"/>
</dbReference>
<dbReference type="GO" id="GO:0030280">
    <property type="term" value="F:structural constituent of skin epidermis"/>
    <property type="evidence" value="ECO:0000314"/>
    <property type="project" value="MGI"/>
</dbReference>
<dbReference type="GO" id="GO:0031424">
    <property type="term" value="P:keratinization"/>
    <property type="evidence" value="ECO:0007669"/>
    <property type="project" value="UniProtKB-KW"/>
</dbReference>
<sequence length="486" mass="38200">MSHQKKQPTPCPPVGCGKTSGGGGGGGGGGGGGYYSGGGSGCGGGSSGGGSSCGGGGGGSYGGGSSCGGGGGSGGGVKYSGGGGGSSCGGGYSGGGGGSSCGGGYSGGGGGSSCGGGYSGGGGGSSCGGGSYSGGGSSCGGGGGSGGGVKYSGGGGGGGSSCGGGSSGGGGGGSSCGGGSGGGGSYCGGSSGGGSSGGCGGGSGGGKYSGGGGGSSCGGGYSGGGGSSGGSSCGGGYSGGGGSSCGGGGGYSGGGGSSCGGGSSGGGGGGSSQQYQCQSYGGGSSGGSSCGGRYSGGGGSSCGGGYSGGGGSSCGGGSSGGGSSCGGSGGGGYSGGGGGSCGGGSSGGGGGYYSSQQTSQTSCAPQQSYGGGSSGGGGSCGGGSSGGGGGGGCYSSGGGGSSGGCGGGYSGGGGGCGGGSSGGSGGGCGGGSSGGSGGGCGGGYSGGGGGGSSCGGGSSGGGSGGGKGVPVCHQTQQKQAPTWPCK</sequence>
<keyword id="KW-1015">Disulfide bond</keyword>
<keyword id="KW-0417">Keratinization</keyword>
<keyword id="KW-1185">Reference proteome</keyword>
<keyword id="KW-0677">Repeat</keyword>
<proteinExistence type="evidence at protein level"/>
<name>LORI_MOUSE</name>
<protein>
    <recommendedName>
        <fullName evidence="5">Loricrin</fullName>
    </recommendedName>
</protein>
<reference key="1">
    <citation type="journal article" date="1990" name="Cell">
        <title>Identification of a major keratinocyte cell envelope protein, loricrin.</title>
        <authorList>
            <person name="Mehrel T."/>
            <person name="Hohl D."/>
            <person name="Rothnagel J.A."/>
            <person name="Longley M.A."/>
            <person name="Bundman D."/>
            <person name="Cheng C."/>
            <person name="Lichti U."/>
            <person name="Bisher M.E."/>
            <person name="Steven A.C."/>
            <person name="Steinart P.M."/>
            <person name="Yuspa S.H."/>
            <person name="Roop D.R."/>
        </authorList>
    </citation>
    <scope>NUCLEOTIDE SEQUENCE [MRNA]</scope>
</reference>
<reference key="2">
    <citation type="journal article" date="1995" name="J. Biol. Chem.">
        <title>The proximal promoter of the mouse loricrin gene contains a functional AP-1 element and directs keratinocyte-specific but not differentiation-specific expression.</title>
        <authorList>
            <person name="DiSepio D."/>
            <person name="Jones A."/>
            <person name="Longley M.A."/>
            <person name="Bundman D."/>
            <person name="Rothnagel J.A."/>
            <person name="Roop D.R."/>
        </authorList>
    </citation>
    <scope>NUCLEOTIDE SEQUENCE [GENOMIC DNA]</scope>
    <source>
        <strain>BALB/cJ</strain>
    </source>
</reference>
<reference key="3">
    <citation type="journal article" date="2004" name="Genome Res.">
        <title>The status, quality, and expansion of the NIH full-length cDNA project: the Mammalian Gene Collection (MGC).</title>
        <authorList>
            <consortium name="The MGC Project Team"/>
        </authorList>
    </citation>
    <scope>NUCLEOTIDE SEQUENCE [LARGE SCALE MRNA]</scope>
    <source>
        <tissue>Olfactory epithelium</tissue>
        <tissue>Salivary gland</tissue>
    </source>
</reference>
<reference key="4">
    <citation type="journal article" date="2014" name="J. Invest. Dermatol.">
        <title>Loss of keratin K2 expression causes aberrant aggregation of K10, hyperkeratosis, and inflammation.</title>
        <authorList>
            <person name="Fischer H."/>
            <person name="Langbein L."/>
            <person name="Reichelt J."/>
            <person name="Praetzel-Wunder S."/>
            <person name="Buchberger M."/>
            <person name="Ghannadan M."/>
            <person name="Tschachler E."/>
            <person name="Eckhart L."/>
        </authorList>
    </citation>
    <scope>TISSUE SPECIFICITY</scope>
</reference>
<reference key="5">
    <citation type="journal article" date="2000" name="J. Cell Biol.">
        <title>Transgenic mice expressing a mutant form of loricrin reveal the molecular basis of the skin diseases, Vohwinkel syndrome and progressive symmetric erythrokeratoderma.</title>
        <authorList>
            <person name="Suga Y."/>
            <person name="Jarnik M."/>
            <person name="Attar P.S."/>
            <person name="Longley M.A."/>
            <person name="Bundman D."/>
            <person name="Steven A.C."/>
            <person name="Koch P.J."/>
            <person name="Roop D.R."/>
        </authorList>
    </citation>
    <scope>MUTANT FORM</scope>
</reference>
<reference key="6">
    <citation type="journal article" date="2020" name="Dev. Biol.">
        <title>Keratin 13 deficiency causes white sponge nevus in mice.</title>
        <authorList>
            <person name="Simonson L."/>
            <person name="Vold S."/>
            <person name="Mowers C."/>
            <person name="Massey R.J."/>
            <person name="Ong I.M."/>
            <person name="Longley B.J."/>
            <person name="Chang H."/>
        </authorList>
    </citation>
    <scope>DEVELOPMENTAL STAGE</scope>
</reference>
<feature type="chain" id="PRO_0000084459" description="Loricrin">
    <location>
        <begin position="1"/>
        <end position="486"/>
    </location>
</feature>
<feature type="region of interest" description="Disordered" evidence="2">
    <location>
        <begin position="451"/>
        <end position="486"/>
    </location>
</feature>
<feature type="compositionally biased region" description="Gly residues" evidence="2">
    <location>
        <begin position="451"/>
        <end position="468"/>
    </location>
</feature>
<feature type="sequence conflict" description="In Ref. 1 and 2." evidence="5" ref="1 2">
    <location>
        <begin position="21"/>
        <end position="25"/>
    </location>
</feature>
<feature type="sequence conflict" description="In Ref. 1 and 2." evidence="5" ref="1 2">
    <original>S</original>
    <variation>T</variation>
    <location>
        <position position="257"/>
    </location>
</feature>
<feature type="sequence conflict" description="In Ref. 1 and 2." evidence="5" ref="1 2">
    <original>R</original>
    <variation>G</variation>
    <location>
        <position position="293"/>
    </location>
</feature>
<comment type="function">
    <text>Major keratinocyte cell envelope protein.</text>
</comment>
<comment type="tissue specificity">
    <text evidence="3">Expressed in the epidermis of the ear (at protein level).</text>
</comment>
<comment type="developmental stage">
    <text evidence="4">Expressed in the spinous and granular layers of the tongue at P20.</text>
</comment>
<comment type="PTM">
    <text>Substrate of transglutaminases. Some glutamines and lysines are cross-linked to other loricrin molecules and to SPRRs proteins.</text>
</comment>
<comment type="PTM">
    <text evidence="1">Contains inter- or intramolecular disulfide-bonds.</text>
</comment>
<comment type="miscellaneous">
    <text>Transgenic mice expressing a C-terminal truncated form of loricrin exhibited, at birth, erythrokeratoderma with an epidermal barrier dysfunction. 4 days after birth, high-expressing transgenic animals showed a generalized scaling of the skin, as well as a constricting band encircling the tail and, by day 7, a thickening of the footpads. Transgenic mice also showed retention of nuclei in the stratum corneum. The mutant loricrin protein is found in the nucleus and cytoplasm of epidermal keratinocytes, but is not detect in the cornified cell envelope. The C-terminal domain of the mutant loricrin contains a nuclear localization signal.</text>
</comment>
<accession>P18165</accession>
<accession>Q8R0I9</accession>
<evidence type="ECO:0000250" key="1"/>
<evidence type="ECO:0000256" key="2">
    <source>
        <dbReference type="SAM" id="MobiDB-lite"/>
    </source>
</evidence>
<evidence type="ECO:0000269" key="3">
    <source>
    </source>
</evidence>
<evidence type="ECO:0000269" key="4">
    <source>
    </source>
</evidence>
<evidence type="ECO:0000305" key="5"/>
<gene>
    <name type="primary">Loricrin</name>
    <name type="synonym">Lor</name>
</gene>